<reference key="1">
    <citation type="journal article" date="2007" name="Nat. Biotechnol.">
        <title>Complete genome sequence of the myxobacterium Sorangium cellulosum.</title>
        <authorList>
            <person name="Schneiker S."/>
            <person name="Perlova O."/>
            <person name="Kaiser O."/>
            <person name="Gerth K."/>
            <person name="Alici A."/>
            <person name="Altmeyer M.O."/>
            <person name="Bartels D."/>
            <person name="Bekel T."/>
            <person name="Beyer S."/>
            <person name="Bode E."/>
            <person name="Bode H.B."/>
            <person name="Bolten C.J."/>
            <person name="Choudhuri J.V."/>
            <person name="Doss S."/>
            <person name="Elnakady Y.A."/>
            <person name="Frank B."/>
            <person name="Gaigalat L."/>
            <person name="Goesmann A."/>
            <person name="Groeger C."/>
            <person name="Gross F."/>
            <person name="Jelsbak L."/>
            <person name="Jelsbak L."/>
            <person name="Kalinowski J."/>
            <person name="Kegler C."/>
            <person name="Knauber T."/>
            <person name="Konietzny S."/>
            <person name="Kopp M."/>
            <person name="Krause L."/>
            <person name="Krug D."/>
            <person name="Linke B."/>
            <person name="Mahmud T."/>
            <person name="Martinez-Arias R."/>
            <person name="McHardy A.C."/>
            <person name="Merai M."/>
            <person name="Meyer F."/>
            <person name="Mormann S."/>
            <person name="Munoz-Dorado J."/>
            <person name="Perez J."/>
            <person name="Pradella S."/>
            <person name="Rachid S."/>
            <person name="Raddatz G."/>
            <person name="Rosenau F."/>
            <person name="Rueckert C."/>
            <person name="Sasse F."/>
            <person name="Scharfe M."/>
            <person name="Schuster S.C."/>
            <person name="Suen G."/>
            <person name="Treuner-Lange A."/>
            <person name="Velicer G.J."/>
            <person name="Vorholter F.-J."/>
            <person name="Weissman K.J."/>
            <person name="Welch R.D."/>
            <person name="Wenzel S.C."/>
            <person name="Whitworth D.E."/>
            <person name="Wilhelm S."/>
            <person name="Wittmann C."/>
            <person name="Bloecker H."/>
            <person name="Puehler A."/>
            <person name="Mueller R."/>
        </authorList>
    </citation>
    <scope>NUCLEOTIDE SEQUENCE [LARGE SCALE GENOMIC DNA]</scope>
    <source>
        <strain>So ce56</strain>
    </source>
</reference>
<gene>
    <name evidence="1" type="primary">hisF</name>
    <name type="ordered locus">sce5886</name>
</gene>
<accession>A9GBI6</accession>
<name>HIS6_SORC5</name>
<evidence type="ECO:0000255" key="1">
    <source>
        <dbReference type="HAMAP-Rule" id="MF_01013"/>
    </source>
</evidence>
<feature type="chain" id="PRO_1000084082" description="Imidazole glycerol phosphate synthase subunit HisF">
    <location>
        <begin position="1"/>
        <end position="270"/>
    </location>
</feature>
<feature type="active site" evidence="1">
    <location>
        <position position="11"/>
    </location>
</feature>
<feature type="active site" evidence="1">
    <location>
        <position position="130"/>
    </location>
</feature>
<dbReference type="EC" id="4.3.2.10" evidence="1"/>
<dbReference type="EMBL" id="AM746676">
    <property type="protein sequence ID" value="CAN96049.1"/>
    <property type="molecule type" value="Genomic_DNA"/>
</dbReference>
<dbReference type="RefSeq" id="WP_012238514.1">
    <property type="nucleotide sequence ID" value="NC_010162.1"/>
</dbReference>
<dbReference type="SMR" id="A9GBI6"/>
<dbReference type="STRING" id="448385.sce5886"/>
<dbReference type="KEGG" id="scl:sce5886"/>
<dbReference type="eggNOG" id="COG0107">
    <property type="taxonomic scope" value="Bacteria"/>
</dbReference>
<dbReference type="HOGENOM" id="CLU_048577_4_0_7"/>
<dbReference type="OrthoDB" id="9807749at2"/>
<dbReference type="BioCyc" id="SCEL448385:SCE_RS30230-MONOMER"/>
<dbReference type="UniPathway" id="UPA00031">
    <property type="reaction ID" value="UER00010"/>
</dbReference>
<dbReference type="Proteomes" id="UP000002139">
    <property type="component" value="Chromosome"/>
</dbReference>
<dbReference type="GO" id="GO:0005737">
    <property type="term" value="C:cytoplasm"/>
    <property type="evidence" value="ECO:0007669"/>
    <property type="project" value="UniProtKB-SubCell"/>
</dbReference>
<dbReference type="GO" id="GO:0000107">
    <property type="term" value="F:imidazoleglycerol-phosphate synthase activity"/>
    <property type="evidence" value="ECO:0007669"/>
    <property type="project" value="UniProtKB-UniRule"/>
</dbReference>
<dbReference type="GO" id="GO:0016829">
    <property type="term" value="F:lyase activity"/>
    <property type="evidence" value="ECO:0007669"/>
    <property type="project" value="UniProtKB-KW"/>
</dbReference>
<dbReference type="GO" id="GO:0000105">
    <property type="term" value="P:L-histidine biosynthetic process"/>
    <property type="evidence" value="ECO:0007669"/>
    <property type="project" value="UniProtKB-UniRule"/>
</dbReference>
<dbReference type="CDD" id="cd04731">
    <property type="entry name" value="HisF"/>
    <property type="match status" value="1"/>
</dbReference>
<dbReference type="FunFam" id="3.20.20.70:FF:000006">
    <property type="entry name" value="Imidazole glycerol phosphate synthase subunit HisF"/>
    <property type="match status" value="1"/>
</dbReference>
<dbReference type="Gene3D" id="3.20.20.70">
    <property type="entry name" value="Aldolase class I"/>
    <property type="match status" value="1"/>
</dbReference>
<dbReference type="HAMAP" id="MF_01013">
    <property type="entry name" value="HisF"/>
    <property type="match status" value="1"/>
</dbReference>
<dbReference type="InterPro" id="IPR013785">
    <property type="entry name" value="Aldolase_TIM"/>
</dbReference>
<dbReference type="InterPro" id="IPR006062">
    <property type="entry name" value="His_biosynth"/>
</dbReference>
<dbReference type="InterPro" id="IPR004651">
    <property type="entry name" value="HisF"/>
</dbReference>
<dbReference type="InterPro" id="IPR050064">
    <property type="entry name" value="IGPS_HisA/HisF"/>
</dbReference>
<dbReference type="InterPro" id="IPR011060">
    <property type="entry name" value="RibuloseP-bd_barrel"/>
</dbReference>
<dbReference type="NCBIfam" id="TIGR00735">
    <property type="entry name" value="hisF"/>
    <property type="match status" value="1"/>
</dbReference>
<dbReference type="PANTHER" id="PTHR21235:SF2">
    <property type="entry name" value="IMIDAZOLE GLYCEROL PHOSPHATE SYNTHASE HISHF"/>
    <property type="match status" value="1"/>
</dbReference>
<dbReference type="PANTHER" id="PTHR21235">
    <property type="entry name" value="IMIDAZOLE GLYCEROL PHOSPHATE SYNTHASE SUBUNIT HISF/H IGP SYNTHASE SUBUNIT HISF/H"/>
    <property type="match status" value="1"/>
</dbReference>
<dbReference type="Pfam" id="PF00977">
    <property type="entry name" value="His_biosynth"/>
    <property type="match status" value="1"/>
</dbReference>
<dbReference type="SUPFAM" id="SSF51366">
    <property type="entry name" value="Ribulose-phoshate binding barrel"/>
    <property type="match status" value="1"/>
</dbReference>
<sequence>MLAKRIIPCLDVKDGRVVKGVRFVGLRDAGDPVEAARRYDAEGADEITFLDITASHEKRGIILDVVARTAEVLFTPLTVGGGVKSEQDIKALLDAGADKVAINTAAVNDPDLVRRAADRWGAQAIVVAIDARRIADPSRVAWTVVTHGGRRDTGRDAVAWAEEIARAGAGELLVTSMDRDGTRDGYDLLLTAAIARAVPVPVIASGGVGTLDHLRAGLVEGGADAALAASIFHDAEYTIGEAKAYLEAAGVPVRPARAGGPGDAASRGRS</sequence>
<protein>
    <recommendedName>
        <fullName evidence="1">Imidazole glycerol phosphate synthase subunit HisF</fullName>
        <ecNumber evidence="1">4.3.2.10</ecNumber>
    </recommendedName>
    <alternativeName>
        <fullName evidence="1">IGP synthase cyclase subunit</fullName>
    </alternativeName>
    <alternativeName>
        <fullName evidence="1">IGP synthase subunit HisF</fullName>
    </alternativeName>
    <alternativeName>
        <fullName evidence="1">ImGP synthase subunit HisF</fullName>
        <shortName evidence="1">IGPS subunit HisF</shortName>
    </alternativeName>
</protein>
<keyword id="KW-0028">Amino-acid biosynthesis</keyword>
<keyword id="KW-0963">Cytoplasm</keyword>
<keyword id="KW-0368">Histidine biosynthesis</keyword>
<keyword id="KW-0456">Lyase</keyword>
<keyword id="KW-1185">Reference proteome</keyword>
<proteinExistence type="inferred from homology"/>
<comment type="function">
    <text evidence="1">IGPS catalyzes the conversion of PRFAR and glutamine to IGP, AICAR and glutamate. The HisF subunit catalyzes the cyclization activity that produces IGP and AICAR from PRFAR using the ammonia provided by the HisH subunit.</text>
</comment>
<comment type="catalytic activity">
    <reaction evidence="1">
        <text>5-[(5-phospho-1-deoxy-D-ribulos-1-ylimino)methylamino]-1-(5-phospho-beta-D-ribosyl)imidazole-4-carboxamide + L-glutamine = D-erythro-1-(imidazol-4-yl)glycerol 3-phosphate + 5-amino-1-(5-phospho-beta-D-ribosyl)imidazole-4-carboxamide + L-glutamate + H(+)</text>
        <dbReference type="Rhea" id="RHEA:24793"/>
        <dbReference type="ChEBI" id="CHEBI:15378"/>
        <dbReference type="ChEBI" id="CHEBI:29985"/>
        <dbReference type="ChEBI" id="CHEBI:58278"/>
        <dbReference type="ChEBI" id="CHEBI:58359"/>
        <dbReference type="ChEBI" id="CHEBI:58475"/>
        <dbReference type="ChEBI" id="CHEBI:58525"/>
        <dbReference type="EC" id="4.3.2.10"/>
    </reaction>
</comment>
<comment type="pathway">
    <text evidence="1">Amino-acid biosynthesis; L-histidine biosynthesis; L-histidine from 5-phospho-alpha-D-ribose 1-diphosphate: step 5/9.</text>
</comment>
<comment type="subunit">
    <text evidence="1">Heterodimer of HisH and HisF.</text>
</comment>
<comment type="subcellular location">
    <subcellularLocation>
        <location evidence="1">Cytoplasm</location>
    </subcellularLocation>
</comment>
<comment type="similarity">
    <text evidence="1">Belongs to the HisA/HisF family.</text>
</comment>
<organism>
    <name type="scientific">Sorangium cellulosum (strain So ce56)</name>
    <name type="common">Polyangium cellulosum (strain So ce56)</name>
    <dbReference type="NCBI Taxonomy" id="448385"/>
    <lineage>
        <taxon>Bacteria</taxon>
        <taxon>Pseudomonadati</taxon>
        <taxon>Myxococcota</taxon>
        <taxon>Polyangia</taxon>
        <taxon>Polyangiales</taxon>
        <taxon>Polyangiaceae</taxon>
        <taxon>Sorangium</taxon>
    </lineage>
</organism>